<gene>
    <name evidence="1" type="primary">leuS</name>
    <name type="ordered locus">GTNG_2742</name>
</gene>
<accession>A4IRY3</accession>
<comment type="catalytic activity">
    <reaction evidence="1">
        <text>tRNA(Leu) + L-leucine + ATP = L-leucyl-tRNA(Leu) + AMP + diphosphate</text>
        <dbReference type="Rhea" id="RHEA:11688"/>
        <dbReference type="Rhea" id="RHEA-COMP:9613"/>
        <dbReference type="Rhea" id="RHEA-COMP:9622"/>
        <dbReference type="ChEBI" id="CHEBI:30616"/>
        <dbReference type="ChEBI" id="CHEBI:33019"/>
        <dbReference type="ChEBI" id="CHEBI:57427"/>
        <dbReference type="ChEBI" id="CHEBI:78442"/>
        <dbReference type="ChEBI" id="CHEBI:78494"/>
        <dbReference type="ChEBI" id="CHEBI:456215"/>
        <dbReference type="EC" id="6.1.1.4"/>
    </reaction>
</comment>
<comment type="subcellular location">
    <subcellularLocation>
        <location evidence="1">Cytoplasm</location>
    </subcellularLocation>
</comment>
<comment type="similarity">
    <text evidence="1">Belongs to the class-I aminoacyl-tRNA synthetase family.</text>
</comment>
<comment type="sequence caution" evidence="2">
    <conflict type="erroneous initiation">
        <sequence resource="EMBL-CDS" id="ABO68087"/>
    </conflict>
</comment>
<dbReference type="EC" id="6.1.1.4" evidence="1"/>
<dbReference type="EMBL" id="CP000557">
    <property type="protein sequence ID" value="ABO68087.1"/>
    <property type="status" value="ALT_INIT"/>
    <property type="molecule type" value="Genomic_DNA"/>
</dbReference>
<dbReference type="RefSeq" id="WP_008880943.1">
    <property type="nucleotide sequence ID" value="NC_009328.1"/>
</dbReference>
<dbReference type="SMR" id="A4IRY3"/>
<dbReference type="GeneID" id="87623115"/>
<dbReference type="KEGG" id="gtn:GTNG_2742"/>
<dbReference type="eggNOG" id="COG0495">
    <property type="taxonomic scope" value="Bacteria"/>
</dbReference>
<dbReference type="HOGENOM" id="CLU_004427_0_0_9"/>
<dbReference type="Proteomes" id="UP000001578">
    <property type="component" value="Chromosome"/>
</dbReference>
<dbReference type="GO" id="GO:0005829">
    <property type="term" value="C:cytosol"/>
    <property type="evidence" value="ECO:0007669"/>
    <property type="project" value="TreeGrafter"/>
</dbReference>
<dbReference type="GO" id="GO:0002161">
    <property type="term" value="F:aminoacyl-tRNA deacylase activity"/>
    <property type="evidence" value="ECO:0007669"/>
    <property type="project" value="InterPro"/>
</dbReference>
<dbReference type="GO" id="GO:0005524">
    <property type="term" value="F:ATP binding"/>
    <property type="evidence" value="ECO:0007669"/>
    <property type="project" value="UniProtKB-UniRule"/>
</dbReference>
<dbReference type="GO" id="GO:0004823">
    <property type="term" value="F:leucine-tRNA ligase activity"/>
    <property type="evidence" value="ECO:0007669"/>
    <property type="project" value="UniProtKB-UniRule"/>
</dbReference>
<dbReference type="GO" id="GO:0006429">
    <property type="term" value="P:leucyl-tRNA aminoacylation"/>
    <property type="evidence" value="ECO:0007669"/>
    <property type="project" value="UniProtKB-UniRule"/>
</dbReference>
<dbReference type="CDD" id="cd07958">
    <property type="entry name" value="Anticodon_Ia_Leu_BEm"/>
    <property type="match status" value="1"/>
</dbReference>
<dbReference type="CDD" id="cd00812">
    <property type="entry name" value="LeuRS_core"/>
    <property type="match status" value="1"/>
</dbReference>
<dbReference type="FunFam" id="1.10.730.10:FF:000012">
    <property type="entry name" value="Leucine--tRNA ligase"/>
    <property type="match status" value="1"/>
</dbReference>
<dbReference type="FunFam" id="3.10.20.590:FF:000001">
    <property type="entry name" value="Leucine--tRNA ligase"/>
    <property type="match status" value="1"/>
</dbReference>
<dbReference type="FunFam" id="3.40.50.620:FF:000056">
    <property type="entry name" value="Leucine--tRNA ligase"/>
    <property type="match status" value="1"/>
</dbReference>
<dbReference type="FunFam" id="3.40.50.620:FF:000077">
    <property type="entry name" value="Leucine--tRNA ligase"/>
    <property type="match status" value="1"/>
</dbReference>
<dbReference type="FunFam" id="3.90.740.10:FF:000017">
    <property type="entry name" value="Leucine--tRNA ligase"/>
    <property type="match status" value="1"/>
</dbReference>
<dbReference type="FunFam" id="1.10.730.10:FF:000011">
    <property type="entry name" value="Leucine--tRNA ligase chloroplastic/mitochondrial"/>
    <property type="match status" value="1"/>
</dbReference>
<dbReference type="Gene3D" id="3.10.20.590">
    <property type="match status" value="1"/>
</dbReference>
<dbReference type="Gene3D" id="3.40.50.620">
    <property type="entry name" value="HUPs"/>
    <property type="match status" value="2"/>
</dbReference>
<dbReference type="Gene3D" id="1.10.730.10">
    <property type="entry name" value="Isoleucyl-tRNA Synthetase, Domain 1"/>
    <property type="match status" value="1"/>
</dbReference>
<dbReference type="HAMAP" id="MF_00049_B">
    <property type="entry name" value="Leu_tRNA_synth_B"/>
    <property type="match status" value="1"/>
</dbReference>
<dbReference type="InterPro" id="IPR001412">
    <property type="entry name" value="aa-tRNA-synth_I_CS"/>
</dbReference>
<dbReference type="InterPro" id="IPR002300">
    <property type="entry name" value="aa-tRNA-synth_Ia"/>
</dbReference>
<dbReference type="InterPro" id="IPR002302">
    <property type="entry name" value="Leu-tRNA-ligase"/>
</dbReference>
<dbReference type="InterPro" id="IPR025709">
    <property type="entry name" value="Leu_tRNA-synth_edit"/>
</dbReference>
<dbReference type="InterPro" id="IPR013155">
    <property type="entry name" value="M/V/L/I-tRNA-synth_anticd-bd"/>
</dbReference>
<dbReference type="InterPro" id="IPR015413">
    <property type="entry name" value="Methionyl/Leucyl_tRNA_Synth"/>
</dbReference>
<dbReference type="InterPro" id="IPR014729">
    <property type="entry name" value="Rossmann-like_a/b/a_fold"/>
</dbReference>
<dbReference type="InterPro" id="IPR009080">
    <property type="entry name" value="tRNAsynth_Ia_anticodon-bd"/>
</dbReference>
<dbReference type="InterPro" id="IPR009008">
    <property type="entry name" value="Val/Leu/Ile-tRNA-synth_edit"/>
</dbReference>
<dbReference type="NCBIfam" id="TIGR00396">
    <property type="entry name" value="leuS_bact"/>
    <property type="match status" value="1"/>
</dbReference>
<dbReference type="PANTHER" id="PTHR43740:SF2">
    <property type="entry name" value="LEUCINE--TRNA LIGASE, MITOCHONDRIAL"/>
    <property type="match status" value="1"/>
</dbReference>
<dbReference type="PANTHER" id="PTHR43740">
    <property type="entry name" value="LEUCYL-TRNA SYNTHETASE"/>
    <property type="match status" value="1"/>
</dbReference>
<dbReference type="Pfam" id="PF08264">
    <property type="entry name" value="Anticodon_1"/>
    <property type="match status" value="1"/>
</dbReference>
<dbReference type="Pfam" id="PF00133">
    <property type="entry name" value="tRNA-synt_1"/>
    <property type="match status" value="1"/>
</dbReference>
<dbReference type="Pfam" id="PF13603">
    <property type="entry name" value="tRNA-synt_1_2"/>
    <property type="match status" value="1"/>
</dbReference>
<dbReference type="Pfam" id="PF09334">
    <property type="entry name" value="tRNA-synt_1g"/>
    <property type="match status" value="1"/>
</dbReference>
<dbReference type="PRINTS" id="PR00985">
    <property type="entry name" value="TRNASYNTHLEU"/>
</dbReference>
<dbReference type="SUPFAM" id="SSF47323">
    <property type="entry name" value="Anticodon-binding domain of a subclass of class I aminoacyl-tRNA synthetases"/>
    <property type="match status" value="1"/>
</dbReference>
<dbReference type="SUPFAM" id="SSF52374">
    <property type="entry name" value="Nucleotidylyl transferase"/>
    <property type="match status" value="1"/>
</dbReference>
<dbReference type="SUPFAM" id="SSF50677">
    <property type="entry name" value="ValRS/IleRS/LeuRS editing domain"/>
    <property type="match status" value="1"/>
</dbReference>
<dbReference type="PROSITE" id="PS00178">
    <property type="entry name" value="AA_TRNA_LIGASE_I"/>
    <property type="match status" value="1"/>
</dbReference>
<organism>
    <name type="scientific">Geobacillus thermodenitrificans (strain NG80-2)</name>
    <dbReference type="NCBI Taxonomy" id="420246"/>
    <lineage>
        <taxon>Bacteria</taxon>
        <taxon>Bacillati</taxon>
        <taxon>Bacillota</taxon>
        <taxon>Bacilli</taxon>
        <taxon>Bacillales</taxon>
        <taxon>Anoxybacillaceae</taxon>
        <taxon>Geobacillus</taxon>
    </lineage>
</organism>
<evidence type="ECO:0000255" key="1">
    <source>
        <dbReference type="HAMAP-Rule" id="MF_00049"/>
    </source>
</evidence>
<evidence type="ECO:0000305" key="2"/>
<reference key="1">
    <citation type="journal article" date="2007" name="Proc. Natl. Acad. Sci. U.S.A.">
        <title>Genome and proteome of long-chain alkane degrading Geobacillus thermodenitrificans NG80-2 isolated from a deep-subsurface oil reservoir.</title>
        <authorList>
            <person name="Feng L."/>
            <person name="Wang W."/>
            <person name="Cheng J."/>
            <person name="Ren Y."/>
            <person name="Zhao G."/>
            <person name="Gao C."/>
            <person name="Tang Y."/>
            <person name="Liu X."/>
            <person name="Han W."/>
            <person name="Peng X."/>
            <person name="Liu R."/>
            <person name="Wang L."/>
        </authorList>
    </citation>
    <scope>NUCLEOTIDE SEQUENCE [LARGE SCALE GENOMIC DNA]</scope>
    <source>
        <strain>NG80-2</strain>
    </source>
</reference>
<proteinExistence type="inferred from homology"/>
<name>SYL_GEOTN</name>
<sequence length="805" mass="92346">MSFNHREIEKKWQDYWEQHKTFRTPDESDKPKFYVLDMFPYPSGAGLHVGHPEGYTATDILARMKRMQGYNVLHPMGWDAFGLPAEQYALDTGNDPAEFTQKNIDNFRRQIKSLGFSYDWDREINTTDPNYYKWTQWIFLKLYEKGLAYMDEVPVNWCPALGTVLANEEVINGRSERGGHPVIRKPMRQWMLKITAYADRLLEDLEELDWPESIKEMQRNWIGRSEGAEIEFAVDGHDESFTVFTTRPDTLFGATYAVLAPEHPLVEKITTPEQKPAVDAYLKEVQSKSDLERTDLAKEKTGVFTGAYAIHPVTGDKLPIWIADYVLMGYGTGAIMAVPAHDERDYEFAKTFNLPIKEVVAGGNVENEPYTGDGEHINSEFLNGLNKQEAIEKMIAWLEENGKGQKKVSYRLRDWLFSRQRYWGEPIPVIHWEDGTMTTVPEEELPLVLPKTDEIKPSGTGESPLANIEEWVNVVDPKTGKKGRRETNTMPQWAGSCWYYLRYIDPHNDKQLADPEKLKQWLPVDVYIGGAEHAVLHLLYARFWHKVLYDLGIVPTKEPFQKLFNQGMILGENNEKMSKSKGNVVNPDDIVESHGADTLRLYEMFMGPLEASIAWSTKGLDGARRFLERVWRLFVTEDGQLNPNIVDEPANDTLERVYHQTVKKVTEDYEALRFNTAISQLMVFINEAYKAEQMKKEYMEGFVKLLSPVCPHIGEELWQKLGHTDTIAYEPWPTYDEAKLVEDVVEIVIQINGKVRAKLNVPADLSKEALEERALADEKIKEQLAGKTVRKVITVPGKLVNIVAN</sequence>
<protein>
    <recommendedName>
        <fullName evidence="1">Leucine--tRNA ligase</fullName>
        <ecNumber evidence="1">6.1.1.4</ecNumber>
    </recommendedName>
    <alternativeName>
        <fullName evidence="1">Leucyl-tRNA synthetase</fullName>
        <shortName evidence="1">LeuRS</shortName>
    </alternativeName>
</protein>
<feature type="chain" id="PRO_0000334760" description="Leucine--tRNA ligase">
    <location>
        <begin position="1"/>
        <end position="805"/>
    </location>
</feature>
<feature type="short sequence motif" description="'HIGH' region">
    <location>
        <begin position="40"/>
        <end position="51"/>
    </location>
</feature>
<feature type="short sequence motif" description="'KMSKS' region">
    <location>
        <begin position="576"/>
        <end position="580"/>
    </location>
</feature>
<feature type="binding site" evidence="1">
    <location>
        <position position="579"/>
    </location>
    <ligand>
        <name>ATP</name>
        <dbReference type="ChEBI" id="CHEBI:30616"/>
    </ligand>
</feature>
<keyword id="KW-0030">Aminoacyl-tRNA synthetase</keyword>
<keyword id="KW-0067">ATP-binding</keyword>
<keyword id="KW-0963">Cytoplasm</keyword>
<keyword id="KW-0436">Ligase</keyword>
<keyword id="KW-0547">Nucleotide-binding</keyword>
<keyword id="KW-0648">Protein biosynthesis</keyword>